<gene>
    <name type="primary">ai2b</name>
    <name type="ORF">DDB_G0294423</name>
</gene>
<feature type="chain" id="PRO_0000386628" description="Intron-encoded DNA endonuclease ai2b">
    <location>
        <begin position="1"/>
        <end position="262"/>
    </location>
</feature>
<dbReference type="EC" id="3.1.-.-"/>
<dbReference type="EMBL" id="D50297">
    <property type="protein sequence ID" value="BAA21125.1"/>
    <property type="molecule type" value="Genomic_DNA"/>
</dbReference>
<dbReference type="EMBL" id="AB000109">
    <property type="protein sequence ID" value="BAA78057.1"/>
    <property type="molecule type" value="Genomic_DNA"/>
</dbReference>
<dbReference type="EMBL" id="X81884">
    <property type="protein sequence ID" value="CAA57468.1"/>
    <property type="molecule type" value="Genomic_DNA"/>
</dbReference>
<dbReference type="PIR" id="T43753">
    <property type="entry name" value="T43753"/>
</dbReference>
<dbReference type="RefSeq" id="NP_050075.1">
    <property type="nucleotide sequence ID" value="NC_000895.1"/>
</dbReference>
<dbReference type="SMR" id="O21044"/>
<dbReference type="STRING" id="44689.O21044"/>
<dbReference type="KEGG" id="ddi:DidioMp08"/>
<dbReference type="dictyBase" id="DDB_G0294423">
    <property type="gene designation" value="ai2b"/>
</dbReference>
<dbReference type="VEuPathDB" id="AmoebaDB:DidioMp08"/>
<dbReference type="InParanoid" id="O21044"/>
<dbReference type="PhylomeDB" id="O21044"/>
<dbReference type="PRO" id="PR:O21044"/>
<dbReference type="Proteomes" id="UP000002195">
    <property type="component" value="Mitochondrion"/>
</dbReference>
<dbReference type="GO" id="GO:0005739">
    <property type="term" value="C:mitochondrion"/>
    <property type="evidence" value="ECO:0007669"/>
    <property type="project" value="UniProtKB-SubCell"/>
</dbReference>
<dbReference type="GO" id="GO:0004520">
    <property type="term" value="F:DNA endonuclease activity"/>
    <property type="evidence" value="ECO:0000318"/>
    <property type="project" value="GO_Central"/>
</dbReference>
<dbReference type="GO" id="GO:0006314">
    <property type="term" value="P:intron homing"/>
    <property type="evidence" value="ECO:0007669"/>
    <property type="project" value="UniProtKB-KW"/>
</dbReference>
<dbReference type="Gene3D" id="3.10.28.10">
    <property type="entry name" value="Homing endonucleases"/>
    <property type="match status" value="2"/>
</dbReference>
<dbReference type="InterPro" id="IPR027434">
    <property type="entry name" value="Homing_endonucl"/>
</dbReference>
<dbReference type="InterPro" id="IPR004860">
    <property type="entry name" value="LAGLIDADG_dom"/>
</dbReference>
<dbReference type="PANTHER" id="PTHR37520">
    <property type="entry name" value="INTRON-ENCODED DNA ENDONUCLEASE AI2A-RELATED"/>
    <property type="match status" value="1"/>
</dbReference>
<dbReference type="PANTHER" id="PTHR37520:SF1">
    <property type="entry name" value="INTRON-ENCODED DNA ENDONUCLEASE AI2A-RELATED"/>
    <property type="match status" value="1"/>
</dbReference>
<dbReference type="Pfam" id="PF00961">
    <property type="entry name" value="LAGLIDADG_1"/>
    <property type="match status" value="1"/>
</dbReference>
<dbReference type="SUPFAM" id="SSF55608">
    <property type="entry name" value="Homing endonucleases"/>
    <property type="match status" value="2"/>
</dbReference>
<protein>
    <recommendedName>
        <fullName>Intron-encoded DNA endonuclease ai2b</fullName>
        <ecNumber>3.1.-.-</ecNumber>
    </recommendedName>
</protein>
<organism>
    <name type="scientific">Dictyostelium discoideum</name>
    <name type="common">Social amoeba</name>
    <dbReference type="NCBI Taxonomy" id="44689"/>
    <lineage>
        <taxon>Eukaryota</taxon>
        <taxon>Amoebozoa</taxon>
        <taxon>Evosea</taxon>
        <taxon>Eumycetozoa</taxon>
        <taxon>Dictyostelia</taxon>
        <taxon>Dictyosteliales</taxon>
        <taxon>Dictyosteliaceae</taxon>
        <taxon>Dictyostelium</taxon>
    </lineage>
</organism>
<sequence>MRIQIEKDQLGWVAGLLDSCGNIMFSKTHVSGNIEIKLKLTDYECLENMKTKYGGAVKVSRTGTRYRLNHSEGLKKLLEDINGQIRIPVRVKKVKEVCEKNNIEIKYPDKELSLDTAWLSGFFDGVGSIVINQTTLENKKQLVLTFNQKNNQILIKIQRIVGGNFYINTNTQSGKYKYALYFTSKEEILQLYEYFKKYPSRAYKNKRIGLIPQYYELQTLMTSIHDNQLQETLWKKFMIQWDYKEIDEIQSGEILKQKGVIR</sequence>
<name>AI2B_DICDI</name>
<keyword id="KW-0255">Endonuclease</keyword>
<keyword id="KW-0378">Hydrolase</keyword>
<keyword id="KW-0404">Intron homing</keyword>
<keyword id="KW-0496">Mitochondrion</keyword>
<keyword id="KW-0540">Nuclease</keyword>
<keyword id="KW-1185">Reference proteome</keyword>
<evidence type="ECO:0000250" key="1"/>
<evidence type="ECO:0000269" key="2">
    <source>
    </source>
</evidence>
<evidence type="ECO:0000305" key="3"/>
<accession>O21044</accession>
<accession>Q9T4Y1</accession>
<comment type="function">
    <text evidence="1">Mitochondrial DNA endonuclease involved in intron homing.</text>
</comment>
<comment type="subcellular location">
    <subcellularLocation>
        <location evidence="2">Mitochondrion</location>
    </subcellularLocation>
</comment>
<comment type="similarity">
    <text evidence="3">Belongs to the LAGLIDADG endonuclease family.</text>
</comment>
<geneLocation type="mitochondrion"/>
<proteinExistence type="inferred from homology"/>
<reference key="1">
    <citation type="journal article" date="1997" name="Curr. Genet.">
        <title>Group-I introns in the cytochrome c oxidase genes of Dictyostelium discoideum: two related ORFs in one loop of a group-I intron, a cox1/2 hybrid gene and an unusually large cox3 gene.</title>
        <authorList>
            <person name="Ogawa S."/>
            <person name="Matsuo K."/>
            <person name="Angata K."/>
            <person name="Yanagisawa K."/>
            <person name="Tanaka Y."/>
        </authorList>
    </citation>
    <scope>NUCLEOTIDE SEQUENCE [GENOMIC DNA]</scope>
    <source>
        <strain>AX3</strain>
    </source>
</reference>
<reference key="2">
    <citation type="journal article" date="2000" name="Mol. Gen. Genet.">
        <title>The mitochondrial DNA of Dictyostelium discoideum: complete sequence, gene content and genome organization.</title>
        <authorList>
            <person name="Ogawa S."/>
            <person name="Yoshino R."/>
            <person name="Angata K."/>
            <person name="Iwamoto M."/>
            <person name="Pi M."/>
            <person name="Kuroe K."/>
            <person name="Matsuo K."/>
            <person name="Morio T."/>
            <person name="Urushihara H."/>
            <person name="Yanagisawa K."/>
            <person name="Tanaka Y."/>
        </authorList>
    </citation>
    <scope>NUCLEOTIDE SEQUENCE [LARGE SCALE GENOMIC DNA]</scope>
    <source>
        <strain>AX3</strain>
    </source>
</reference>
<reference key="3">
    <citation type="journal article" date="1997" name="Biochim. Biophys. Acta">
        <title>Subunits I and II of Dictyostelium cytochrome c oxidase are specified by a single open reading frame transcribed into a large polycistronic RNA.</title>
        <authorList>
            <person name="Pellizzari R."/>
            <person name="Anjard C."/>
            <person name="Bisson R."/>
        </authorList>
    </citation>
    <scope>NUCLEOTIDE SEQUENCE [GENOMIC DNA] OF 89-262</scope>
    <source>
        <strain>AX3</strain>
    </source>
</reference>
<reference key="4">
    <citation type="journal article" date="1997" name="Gene">
        <title>A site-specific DNA endonuclease specified by one of two ORFs encoded by a group I intron in Dictyostelium discoideum mitochondrial DNA.</title>
        <authorList>
            <person name="Ogawa S."/>
            <person name="Naito K."/>
            <person name="Angata K."/>
            <person name="Morio T."/>
            <person name="Urushihara H."/>
            <person name="Tanaka Y."/>
        </authorList>
    </citation>
    <scope>SUBCELLULAR LOCATION</scope>
</reference>